<keyword id="KW-0235">DNA replication</keyword>
<keyword id="KW-0238">DNA-binding</keyword>
<keyword id="KW-1048">Host nucleus</keyword>
<name>PAP_SUHVK</name>
<sequence length="384" mass="40306">MSLFDDGLEDLDRHPTHAHHPAQVIHDGPFVLEDGEPLQRTGMLVLSDEHLEHARAAIAPLAAHLAHAFLVFSEAGLLVHASVRGEQVYVTLAPDQFSTFVWSGPQAVFLGNVDGSGGVLDALKVDRRRTVFNVTFEVYGAFPARLLTRRAYFADAGVLATGPGSPSVACVYKHEFNDYCIMLPSRAPDVSLTLSRPQVAKLAAVAKGAAAGTTFALARGLDFSVSSSAGVVTFPARDRDGTAVLERASQRRQGVDAVGATEPFAMTLETAHGLLTLLQRLRAGNAELTFNFFTTPRQAPLFSVTTCGPVRATTFFFCAPADPATVPAAPEGAAATVAAACGAGASAAPAAGDKRPAAPRMYTPIAKRPRAASGEGGHAYGDLF</sequence>
<proteinExistence type="inferred from homology"/>
<comment type="function">
    <text evidence="1">Plays an essential role in viral DNA replication by acting as the polymerase accessory subunit. Associates with the viral polymerase to increase its processivity and forms high-affinity direct interactions with DNA. Facilitates the origin-binding protein loading onto DNA thus increasing its ability to assemble into a functional complex capable of unwinding duplex DNA (By similarity).</text>
</comment>
<comment type="subunit">
    <text evidence="1">Interacts with the DNA polymerase catalytic subunit. Interacts with the origin-binding protein (By similarity).</text>
</comment>
<comment type="subcellular location">
    <subcellularLocation>
        <location evidence="1">Host nucleus</location>
    </subcellularLocation>
</comment>
<comment type="similarity">
    <text evidence="2">Belongs to the herpesviridae DNA polymerase processivity factor family.</text>
</comment>
<reference key="1">
    <citation type="journal article" date="1995" name="J. Virol.">
        <title>Cloning, sequencing, and functional characterization of the two subunits of the pseudorabies virus DNA polymerase holoenzyme: evidence for specificity of interaction.</title>
        <authorList>
            <person name="Berthomme H."/>
            <person name="Monahan S.J."/>
            <person name="Parris D.S."/>
            <person name="Jacquemont B."/>
            <person name="Epstein A.L."/>
        </authorList>
    </citation>
    <scope>NUCLEOTIDE SEQUENCE [GENOMIC DNA]</scope>
</reference>
<accession>P36702</accession>
<organismHost>
    <name type="scientific">Sus scrofa</name>
    <name type="common">Pig</name>
    <dbReference type="NCBI Taxonomy" id="9823"/>
</organismHost>
<organism>
    <name type="scientific">Suid herpesvirus 1 (strain Kaplan)</name>
    <name type="common">SuHV-1</name>
    <name type="synonym">Pseudorabies virus (strain Kaplan)</name>
    <dbReference type="NCBI Taxonomy" id="33703"/>
    <lineage>
        <taxon>Viruses</taxon>
        <taxon>Duplodnaviria</taxon>
        <taxon>Heunggongvirae</taxon>
        <taxon>Peploviricota</taxon>
        <taxon>Herviviricetes</taxon>
        <taxon>Herpesvirales</taxon>
        <taxon>Orthoherpesviridae</taxon>
        <taxon>Alphaherpesvirinae</taxon>
        <taxon>Varicellovirus</taxon>
        <taxon>Varicellovirus suidalpha1</taxon>
        <taxon>Suid herpesvirus 1</taxon>
    </lineage>
</organism>
<evidence type="ECO:0000250" key="1"/>
<evidence type="ECO:0000305" key="2"/>
<feature type="chain" id="PRO_0000116069" description="DNA polymerase processivity factor">
    <location>
        <begin position="1"/>
        <end position="384"/>
    </location>
</feature>
<protein>
    <recommendedName>
        <fullName>DNA polymerase processivity factor</fullName>
    </recommendedName>
    <alternativeName>
        <fullName>Polymerase accessory protein</fullName>
        <shortName>PAP</shortName>
    </alternativeName>
    <alternativeName>
        <fullName>UL42 homolog</fullName>
    </alternativeName>
</protein>
<dbReference type="EMBL" id="M94355">
    <property type="protein sequence ID" value="AAA74384.1"/>
    <property type="molecule type" value="Genomic_DNA"/>
</dbReference>
<dbReference type="RefSeq" id="YP_068345.1">
    <property type="nucleotide sequence ID" value="NC_006151.1"/>
</dbReference>
<dbReference type="SMR" id="P36702"/>
<dbReference type="ABCD" id="P36702">
    <property type="antibodies" value="6 sequenced antibodies"/>
</dbReference>
<dbReference type="GeneID" id="2952523"/>
<dbReference type="KEGG" id="vg:2952523"/>
<dbReference type="GO" id="GO:0042025">
    <property type="term" value="C:host cell nucleus"/>
    <property type="evidence" value="ECO:0007669"/>
    <property type="project" value="UniProtKB-SubCell"/>
</dbReference>
<dbReference type="GO" id="GO:0003677">
    <property type="term" value="F:DNA binding"/>
    <property type="evidence" value="ECO:0007669"/>
    <property type="project" value="UniProtKB-KW"/>
</dbReference>
<dbReference type="GO" id="GO:0006260">
    <property type="term" value="P:DNA replication"/>
    <property type="evidence" value="ECO:0007669"/>
    <property type="project" value="UniProtKB-KW"/>
</dbReference>
<dbReference type="Gene3D" id="3.70.10.10">
    <property type="match status" value="1"/>
</dbReference>
<dbReference type="InterPro" id="IPR046938">
    <property type="entry name" value="DNA_clamp_sf"/>
</dbReference>
<dbReference type="InterPro" id="IPR003202">
    <property type="entry name" value="Herpes_UL42"/>
</dbReference>
<dbReference type="Pfam" id="PF02282">
    <property type="entry name" value="Herpes_UL42"/>
    <property type="match status" value="1"/>
</dbReference>
<dbReference type="SUPFAM" id="SSF55979">
    <property type="entry name" value="DNA clamp"/>
    <property type="match status" value="2"/>
</dbReference>